<sequence>MANPKLVLAYSGGLDTSVAIKWLQERGYDVIACCLDLGEGKDLDFVKEKALKVGAIKSYVIDVKDEFANEYALIALQANALYEGKYPLVSALSRPLIAKKLVEIAELEGAVAVAHGCTGKGNDQVRFEVSIKALNPDLDVIAPVREWSWSREEEIEYAKKHGIPIPVDLDSPFSIDQNLWGRSNECGILEDPWAAPPEEAYELTASLENAPDVPDVIEIGFEQGVPVTLNGKAYPLAQMILELNAIAGKHGVGRIDHVENRLVGIKSREVYECPGAMTLIKAHKELEDLTLVREVAHFKPLIEQKIAEVIYNGLWFSPLKDALVAFLKETQKNVTGVVRVKLFKGHAIVEGRKSPFSLYDEKLATYTSEDEFDHQAAVGFISLYGLPTKVNSIVNKQNKSSVSTGQ</sequence>
<accession>A4IRS3</accession>
<protein>
    <recommendedName>
        <fullName evidence="1">Argininosuccinate synthase</fullName>
        <ecNumber evidence="1">6.3.4.5</ecNumber>
    </recommendedName>
    <alternativeName>
        <fullName evidence="1">Citrulline--aspartate ligase</fullName>
    </alternativeName>
</protein>
<gene>
    <name evidence="1" type="primary">argG</name>
    <name type="ordered locus">GTNG_2682</name>
</gene>
<name>ASSY_GEOTN</name>
<proteinExistence type="inferred from homology"/>
<reference key="1">
    <citation type="journal article" date="2007" name="Proc. Natl. Acad. Sci. U.S.A.">
        <title>Genome and proteome of long-chain alkane degrading Geobacillus thermodenitrificans NG80-2 isolated from a deep-subsurface oil reservoir.</title>
        <authorList>
            <person name="Feng L."/>
            <person name="Wang W."/>
            <person name="Cheng J."/>
            <person name="Ren Y."/>
            <person name="Zhao G."/>
            <person name="Gao C."/>
            <person name="Tang Y."/>
            <person name="Liu X."/>
            <person name="Han W."/>
            <person name="Peng X."/>
            <person name="Liu R."/>
            <person name="Wang L."/>
        </authorList>
    </citation>
    <scope>NUCLEOTIDE SEQUENCE [LARGE SCALE GENOMIC DNA]</scope>
    <source>
        <strain>NG80-2</strain>
    </source>
</reference>
<comment type="catalytic activity">
    <reaction evidence="1">
        <text>L-citrulline + L-aspartate + ATP = 2-(N(omega)-L-arginino)succinate + AMP + diphosphate + H(+)</text>
        <dbReference type="Rhea" id="RHEA:10932"/>
        <dbReference type="ChEBI" id="CHEBI:15378"/>
        <dbReference type="ChEBI" id="CHEBI:29991"/>
        <dbReference type="ChEBI" id="CHEBI:30616"/>
        <dbReference type="ChEBI" id="CHEBI:33019"/>
        <dbReference type="ChEBI" id="CHEBI:57472"/>
        <dbReference type="ChEBI" id="CHEBI:57743"/>
        <dbReference type="ChEBI" id="CHEBI:456215"/>
        <dbReference type="EC" id="6.3.4.5"/>
    </reaction>
</comment>
<comment type="pathway">
    <text evidence="1">Amino-acid biosynthesis; L-arginine biosynthesis; L-arginine from L-ornithine and carbamoyl phosphate: step 2/3.</text>
</comment>
<comment type="subunit">
    <text evidence="1">Homotetramer.</text>
</comment>
<comment type="subcellular location">
    <subcellularLocation>
        <location evidence="1">Cytoplasm</location>
    </subcellularLocation>
</comment>
<comment type="similarity">
    <text evidence="1">Belongs to the argininosuccinate synthase family. Type 1 subfamily.</text>
</comment>
<dbReference type="EC" id="6.3.4.5" evidence="1"/>
<dbReference type="EMBL" id="CP000557">
    <property type="protein sequence ID" value="ABO68027.1"/>
    <property type="molecule type" value="Genomic_DNA"/>
</dbReference>
<dbReference type="RefSeq" id="WP_008880880.1">
    <property type="nucleotide sequence ID" value="NC_009328.1"/>
</dbReference>
<dbReference type="SMR" id="A4IRS3"/>
<dbReference type="GeneID" id="87623175"/>
<dbReference type="KEGG" id="gtn:GTNG_2682"/>
<dbReference type="eggNOG" id="COG0137">
    <property type="taxonomic scope" value="Bacteria"/>
</dbReference>
<dbReference type="HOGENOM" id="CLU_032784_4_2_9"/>
<dbReference type="UniPathway" id="UPA00068">
    <property type="reaction ID" value="UER00113"/>
</dbReference>
<dbReference type="Proteomes" id="UP000001578">
    <property type="component" value="Chromosome"/>
</dbReference>
<dbReference type="GO" id="GO:0005737">
    <property type="term" value="C:cytoplasm"/>
    <property type="evidence" value="ECO:0007669"/>
    <property type="project" value="UniProtKB-SubCell"/>
</dbReference>
<dbReference type="GO" id="GO:0004055">
    <property type="term" value="F:argininosuccinate synthase activity"/>
    <property type="evidence" value="ECO:0007669"/>
    <property type="project" value="UniProtKB-UniRule"/>
</dbReference>
<dbReference type="GO" id="GO:0005524">
    <property type="term" value="F:ATP binding"/>
    <property type="evidence" value="ECO:0007669"/>
    <property type="project" value="UniProtKB-UniRule"/>
</dbReference>
<dbReference type="GO" id="GO:0000053">
    <property type="term" value="P:argininosuccinate metabolic process"/>
    <property type="evidence" value="ECO:0007669"/>
    <property type="project" value="TreeGrafter"/>
</dbReference>
<dbReference type="GO" id="GO:0006526">
    <property type="term" value="P:L-arginine biosynthetic process"/>
    <property type="evidence" value="ECO:0007669"/>
    <property type="project" value="UniProtKB-UniRule"/>
</dbReference>
<dbReference type="GO" id="GO:0000050">
    <property type="term" value="P:urea cycle"/>
    <property type="evidence" value="ECO:0007669"/>
    <property type="project" value="TreeGrafter"/>
</dbReference>
<dbReference type="CDD" id="cd01999">
    <property type="entry name" value="ASS"/>
    <property type="match status" value="1"/>
</dbReference>
<dbReference type="FunFam" id="1.20.5.470:FF:000002">
    <property type="entry name" value="Argininosuccinate synthase"/>
    <property type="match status" value="1"/>
</dbReference>
<dbReference type="FunFam" id="3.40.50.620:FF:000038">
    <property type="entry name" value="Argininosuccinate synthase"/>
    <property type="match status" value="1"/>
</dbReference>
<dbReference type="FunFam" id="3.90.1260.10:FF:000007">
    <property type="entry name" value="Argininosuccinate synthase"/>
    <property type="match status" value="1"/>
</dbReference>
<dbReference type="Gene3D" id="3.90.1260.10">
    <property type="entry name" value="Argininosuccinate synthetase, chain A, domain 2"/>
    <property type="match status" value="1"/>
</dbReference>
<dbReference type="Gene3D" id="3.40.50.620">
    <property type="entry name" value="HUPs"/>
    <property type="match status" value="1"/>
</dbReference>
<dbReference type="Gene3D" id="1.20.5.470">
    <property type="entry name" value="Single helix bin"/>
    <property type="match status" value="1"/>
</dbReference>
<dbReference type="HAMAP" id="MF_00005">
    <property type="entry name" value="Arg_succ_synth_type1"/>
    <property type="match status" value="1"/>
</dbReference>
<dbReference type="InterPro" id="IPR048268">
    <property type="entry name" value="Arginosuc_syn_C"/>
</dbReference>
<dbReference type="InterPro" id="IPR048267">
    <property type="entry name" value="Arginosuc_syn_N"/>
</dbReference>
<dbReference type="InterPro" id="IPR001518">
    <property type="entry name" value="Arginosuc_synth"/>
</dbReference>
<dbReference type="InterPro" id="IPR018223">
    <property type="entry name" value="Arginosuc_synth_CS"/>
</dbReference>
<dbReference type="InterPro" id="IPR023434">
    <property type="entry name" value="Arginosuc_synth_type_1_subfam"/>
</dbReference>
<dbReference type="InterPro" id="IPR024074">
    <property type="entry name" value="AS_cat/multimer_dom_body"/>
</dbReference>
<dbReference type="InterPro" id="IPR014729">
    <property type="entry name" value="Rossmann-like_a/b/a_fold"/>
</dbReference>
<dbReference type="NCBIfam" id="TIGR00032">
    <property type="entry name" value="argG"/>
    <property type="match status" value="1"/>
</dbReference>
<dbReference type="NCBIfam" id="NF001770">
    <property type="entry name" value="PRK00509.1"/>
    <property type="match status" value="1"/>
</dbReference>
<dbReference type="PANTHER" id="PTHR11587">
    <property type="entry name" value="ARGININOSUCCINATE SYNTHASE"/>
    <property type="match status" value="1"/>
</dbReference>
<dbReference type="PANTHER" id="PTHR11587:SF2">
    <property type="entry name" value="ARGININOSUCCINATE SYNTHASE"/>
    <property type="match status" value="1"/>
</dbReference>
<dbReference type="Pfam" id="PF20979">
    <property type="entry name" value="Arginosuc_syn_C"/>
    <property type="match status" value="1"/>
</dbReference>
<dbReference type="Pfam" id="PF00764">
    <property type="entry name" value="Arginosuc_synth"/>
    <property type="match status" value="1"/>
</dbReference>
<dbReference type="SUPFAM" id="SSF52402">
    <property type="entry name" value="Adenine nucleotide alpha hydrolases-like"/>
    <property type="match status" value="1"/>
</dbReference>
<dbReference type="SUPFAM" id="SSF69864">
    <property type="entry name" value="Argininosuccinate synthetase, C-terminal domain"/>
    <property type="match status" value="1"/>
</dbReference>
<dbReference type="PROSITE" id="PS00564">
    <property type="entry name" value="ARGININOSUCCIN_SYN_1"/>
    <property type="match status" value="1"/>
</dbReference>
<dbReference type="PROSITE" id="PS00565">
    <property type="entry name" value="ARGININOSUCCIN_SYN_2"/>
    <property type="match status" value="1"/>
</dbReference>
<keyword id="KW-0028">Amino-acid biosynthesis</keyword>
<keyword id="KW-0055">Arginine biosynthesis</keyword>
<keyword id="KW-0067">ATP-binding</keyword>
<keyword id="KW-0963">Cytoplasm</keyword>
<keyword id="KW-0436">Ligase</keyword>
<keyword id="KW-0547">Nucleotide-binding</keyword>
<feature type="chain" id="PRO_1000000397" description="Argininosuccinate synthase">
    <location>
        <begin position="1"/>
        <end position="406"/>
    </location>
</feature>
<feature type="binding site" evidence="1">
    <location>
        <begin position="9"/>
        <end position="17"/>
    </location>
    <ligand>
        <name>ATP</name>
        <dbReference type="ChEBI" id="CHEBI:30616"/>
    </ligand>
</feature>
<feature type="binding site" evidence="1">
    <location>
        <position position="86"/>
    </location>
    <ligand>
        <name>L-citrulline</name>
        <dbReference type="ChEBI" id="CHEBI:57743"/>
    </ligand>
</feature>
<feature type="binding site" evidence="1">
    <location>
        <position position="116"/>
    </location>
    <ligand>
        <name>ATP</name>
        <dbReference type="ChEBI" id="CHEBI:30616"/>
    </ligand>
</feature>
<feature type="binding site" evidence="1">
    <location>
        <position position="118"/>
    </location>
    <ligand>
        <name>L-aspartate</name>
        <dbReference type="ChEBI" id="CHEBI:29991"/>
    </ligand>
</feature>
<feature type="binding site" evidence="1">
    <location>
        <position position="122"/>
    </location>
    <ligand>
        <name>L-aspartate</name>
        <dbReference type="ChEBI" id="CHEBI:29991"/>
    </ligand>
</feature>
<feature type="binding site" evidence="1">
    <location>
        <position position="122"/>
    </location>
    <ligand>
        <name>L-citrulline</name>
        <dbReference type="ChEBI" id="CHEBI:57743"/>
    </ligand>
</feature>
<feature type="binding site" evidence="1">
    <location>
        <position position="123"/>
    </location>
    <ligand>
        <name>L-aspartate</name>
        <dbReference type="ChEBI" id="CHEBI:29991"/>
    </ligand>
</feature>
<feature type="binding site" evidence="1">
    <location>
        <position position="126"/>
    </location>
    <ligand>
        <name>L-citrulline</name>
        <dbReference type="ChEBI" id="CHEBI:57743"/>
    </ligand>
</feature>
<feature type="binding site" evidence="1">
    <location>
        <position position="174"/>
    </location>
    <ligand>
        <name>L-citrulline</name>
        <dbReference type="ChEBI" id="CHEBI:57743"/>
    </ligand>
</feature>
<feature type="binding site" evidence="1">
    <location>
        <position position="183"/>
    </location>
    <ligand>
        <name>L-citrulline</name>
        <dbReference type="ChEBI" id="CHEBI:57743"/>
    </ligand>
</feature>
<feature type="binding site" evidence="1">
    <location>
        <position position="259"/>
    </location>
    <ligand>
        <name>L-citrulline</name>
        <dbReference type="ChEBI" id="CHEBI:57743"/>
    </ligand>
</feature>
<feature type="binding site" evidence="1">
    <location>
        <position position="271"/>
    </location>
    <ligand>
        <name>L-citrulline</name>
        <dbReference type="ChEBI" id="CHEBI:57743"/>
    </ligand>
</feature>
<evidence type="ECO:0000255" key="1">
    <source>
        <dbReference type="HAMAP-Rule" id="MF_00005"/>
    </source>
</evidence>
<organism>
    <name type="scientific">Geobacillus thermodenitrificans (strain NG80-2)</name>
    <dbReference type="NCBI Taxonomy" id="420246"/>
    <lineage>
        <taxon>Bacteria</taxon>
        <taxon>Bacillati</taxon>
        <taxon>Bacillota</taxon>
        <taxon>Bacilli</taxon>
        <taxon>Bacillales</taxon>
        <taxon>Anoxybacillaceae</taxon>
        <taxon>Geobacillus</taxon>
    </lineage>
</organism>